<dbReference type="EC" id="1.21.98.4"/>
<dbReference type="EMBL" id="X58778">
    <property type="protein sequence ID" value="CAA41583.1"/>
    <property type="molecule type" value="Genomic_DNA"/>
</dbReference>
<dbReference type="PIR" id="S20457">
    <property type="entry name" value="S20457"/>
</dbReference>
<dbReference type="RefSeq" id="WP_004184158.1">
    <property type="nucleotide sequence ID" value="NZ_WYAM01000001.1"/>
</dbReference>
<dbReference type="SMR" id="P27507"/>
<dbReference type="BioCyc" id="MetaCyc:MONOMER-15350"/>
<dbReference type="BRENDA" id="1.21.98.4">
    <property type="organism ID" value="2814"/>
</dbReference>
<dbReference type="UniPathway" id="UPA00539"/>
<dbReference type="GO" id="GO:0051539">
    <property type="term" value="F:4 iron, 4 sulfur cluster binding"/>
    <property type="evidence" value="ECO:0007669"/>
    <property type="project" value="UniProtKB-KW"/>
</dbReference>
<dbReference type="GO" id="GO:0009975">
    <property type="term" value="F:cyclase activity"/>
    <property type="evidence" value="ECO:0007669"/>
    <property type="project" value="UniProtKB-UniRule"/>
</dbReference>
<dbReference type="GO" id="GO:0005506">
    <property type="term" value="F:iron ion binding"/>
    <property type="evidence" value="ECO:0007669"/>
    <property type="project" value="UniProtKB-UniRule"/>
</dbReference>
<dbReference type="GO" id="GO:0016491">
    <property type="term" value="F:oxidoreductase activity"/>
    <property type="evidence" value="ECO:0007669"/>
    <property type="project" value="UniProtKB-KW"/>
</dbReference>
<dbReference type="GO" id="GO:1904047">
    <property type="term" value="F:S-adenosyl-L-methionine binding"/>
    <property type="evidence" value="ECO:0007669"/>
    <property type="project" value="UniProtKB-UniRule"/>
</dbReference>
<dbReference type="GO" id="GO:0018189">
    <property type="term" value="P:pyrroloquinoline quinone biosynthetic process"/>
    <property type="evidence" value="ECO:0007669"/>
    <property type="project" value="UniProtKB-UniRule"/>
</dbReference>
<dbReference type="CDD" id="cd01335">
    <property type="entry name" value="Radical_SAM"/>
    <property type="match status" value="1"/>
</dbReference>
<dbReference type="CDD" id="cd21119">
    <property type="entry name" value="SPASM_PqqE"/>
    <property type="match status" value="1"/>
</dbReference>
<dbReference type="Gene3D" id="3.20.20.70">
    <property type="entry name" value="Aldolase class I"/>
    <property type="match status" value="1"/>
</dbReference>
<dbReference type="HAMAP" id="MF_00660">
    <property type="entry name" value="PqqE"/>
    <property type="match status" value="1"/>
</dbReference>
<dbReference type="InterPro" id="IPR023885">
    <property type="entry name" value="4Fe4S-binding_SPASM_dom"/>
</dbReference>
<dbReference type="InterPro" id="IPR013785">
    <property type="entry name" value="Aldolase_TIM"/>
</dbReference>
<dbReference type="InterPro" id="IPR006638">
    <property type="entry name" value="Elp3/MiaA/NifB-like_rSAM"/>
</dbReference>
<dbReference type="InterPro" id="IPR000385">
    <property type="entry name" value="MoaA_NifB_PqqE_Fe-S-bd_CS"/>
</dbReference>
<dbReference type="InterPro" id="IPR011843">
    <property type="entry name" value="PQQ_synth_PqqE_bac"/>
</dbReference>
<dbReference type="InterPro" id="IPR017200">
    <property type="entry name" value="PqqE-like"/>
</dbReference>
<dbReference type="InterPro" id="IPR050377">
    <property type="entry name" value="Radical_SAM_PqqE_MftC-like"/>
</dbReference>
<dbReference type="InterPro" id="IPR007197">
    <property type="entry name" value="rSAM"/>
</dbReference>
<dbReference type="NCBIfam" id="TIGR02109">
    <property type="entry name" value="PQQ_syn_pqqE"/>
    <property type="match status" value="1"/>
</dbReference>
<dbReference type="PANTHER" id="PTHR11228:SF7">
    <property type="entry name" value="PQQA PEPTIDE CYCLASE"/>
    <property type="match status" value="1"/>
</dbReference>
<dbReference type="PANTHER" id="PTHR11228">
    <property type="entry name" value="RADICAL SAM DOMAIN PROTEIN"/>
    <property type="match status" value="1"/>
</dbReference>
<dbReference type="Pfam" id="PF04055">
    <property type="entry name" value="Radical_SAM"/>
    <property type="match status" value="1"/>
</dbReference>
<dbReference type="Pfam" id="PF13186">
    <property type="entry name" value="SPASM"/>
    <property type="match status" value="1"/>
</dbReference>
<dbReference type="PIRSF" id="PIRSF037420">
    <property type="entry name" value="PQQ_syn_pqqE"/>
    <property type="match status" value="1"/>
</dbReference>
<dbReference type="SFLD" id="SFLDF00280">
    <property type="entry name" value="coenzyme_PQQ_synthesis_protein"/>
    <property type="match status" value="1"/>
</dbReference>
<dbReference type="SFLD" id="SFLDG01386">
    <property type="entry name" value="main_SPASM_domain-containing"/>
    <property type="match status" value="1"/>
</dbReference>
<dbReference type="SMART" id="SM00729">
    <property type="entry name" value="Elp3"/>
    <property type="match status" value="1"/>
</dbReference>
<dbReference type="SUPFAM" id="SSF102114">
    <property type="entry name" value="Radical SAM enzymes"/>
    <property type="match status" value="1"/>
</dbReference>
<dbReference type="PROSITE" id="PS01305">
    <property type="entry name" value="MOAA_NIFB_PQQE"/>
    <property type="match status" value="1"/>
</dbReference>
<dbReference type="PROSITE" id="PS51918">
    <property type="entry name" value="RADICAL_SAM"/>
    <property type="match status" value="1"/>
</dbReference>
<reference key="1">
    <citation type="journal article" date="1992" name="Mol. Gen. Genet.">
        <title>Nucleotide sequence and structure of the Klebsiella pneumoniae pqq operon.</title>
        <authorList>
            <person name="Meulenberg J.J.M."/>
            <person name="Sellink E."/>
            <person name="Riegman N.H."/>
            <person name="Postma P.W."/>
        </authorList>
    </citation>
    <scope>NUCLEOTIDE SEQUENCE [GENOMIC DNA]</scope>
    <source>
        <strain>ATCC 15380 / DSM 2026 / NCTC 418 / NCIMB 418</strain>
    </source>
</reference>
<reference key="2">
    <citation type="journal article" date="1995" name="J. Bacteriol.">
        <title>Synthesis of pyrroloquinoline quinone in vivo and in vitro and detection of an intermediate in the biosynthetic pathway.</title>
        <authorList>
            <person name="Velterop J.S."/>
            <person name="Sellink E."/>
            <person name="Meulenberg J.J."/>
            <person name="David S."/>
            <person name="Bulder I."/>
            <person name="Postma P.W."/>
        </authorList>
    </citation>
    <scope>FUNCTION</scope>
    <source>
        <strain>ATCC 15380 / DSM 2026 / NCTC 418 / NCIMB 418</strain>
    </source>
</reference>
<reference key="3">
    <citation type="journal article" date="2010" name="Chem. Commun. (Camb.)">
        <title>Interaction of PqqE and PqqD in the pyrroloquinoline quinone (PQQ) biosynthetic pathway links PqqD to the radical SAM superfamily.</title>
        <authorList>
            <person name="Wecksler S.R."/>
            <person name="Stoll S."/>
            <person name="Iavarone A.T."/>
            <person name="Imsand E.M."/>
            <person name="Tran H."/>
            <person name="Britt R.D."/>
            <person name="Klinman J.P."/>
        </authorList>
    </citation>
    <scope>INTERACTION WITH PQQD</scope>
</reference>
<gene>
    <name type="primary">pqqE</name>
</gene>
<comment type="function">
    <text>Catalyzes the cross-linking of a glutamate residue and a tyrosine residue in the PqqA protein as part of the biosynthesis of pyrroloquinoline quinone (PQQ).</text>
</comment>
<comment type="catalytic activity">
    <reaction>
        <text>[PQQ precursor protein] + S-adenosyl-L-methionine = E-Y cross-linked-[PQQ precursor protein] + 5'-deoxyadenosine + L-methionine + H(+)</text>
        <dbReference type="Rhea" id="RHEA:56836"/>
        <dbReference type="Rhea" id="RHEA-COMP:14800"/>
        <dbReference type="Rhea" id="RHEA-COMP:14801"/>
        <dbReference type="ChEBI" id="CHEBI:15378"/>
        <dbReference type="ChEBI" id="CHEBI:17319"/>
        <dbReference type="ChEBI" id="CHEBI:57844"/>
        <dbReference type="ChEBI" id="CHEBI:59789"/>
        <dbReference type="ChEBI" id="CHEBI:141026"/>
        <dbReference type="ChEBI" id="CHEBI:141027"/>
        <dbReference type="EC" id="1.21.98.4"/>
    </reaction>
</comment>
<comment type="cofactor">
    <cofactor evidence="1">
        <name>[4Fe-4S] cluster</name>
        <dbReference type="ChEBI" id="CHEBI:49883"/>
    </cofactor>
    <text evidence="1">Binds 1 [4Fe-4S] cluster. The cluster is coordinated with 3 cysteines and an exchangeable S-adenosyl-L-methionine.</text>
</comment>
<comment type="pathway">
    <text>Cofactor biosynthesis; pyrroloquinoline quinone biosynthesis.</text>
</comment>
<comment type="subunit">
    <text evidence="3">Interacts with PqqD. The interaction is necessary for activity of PqqE.</text>
</comment>
<comment type="similarity">
    <text evidence="4">Belongs to the radical SAM superfamily. PqqE family.</text>
</comment>
<proteinExistence type="evidence at protein level"/>
<evidence type="ECO:0000250" key="1"/>
<evidence type="ECO:0000255" key="2">
    <source>
        <dbReference type="PROSITE-ProRule" id="PRU01266"/>
    </source>
</evidence>
<evidence type="ECO:0000269" key="3">
    <source>
    </source>
</evidence>
<evidence type="ECO:0000305" key="4"/>
<protein>
    <recommendedName>
        <fullName>PqqA peptide cyclase</fullName>
        <ecNumber>1.21.98.4</ecNumber>
    </recommendedName>
    <alternativeName>
        <fullName>Coenzyme PQQ synthesis protein E</fullName>
    </alternativeName>
    <alternativeName>
        <fullName>Pyrroloquinoline quinone biosynthesis protein E</fullName>
    </alternativeName>
</protein>
<sequence>MSQSKPTVNPPLWLLAELTYRCPLQCPYCSNPLDFARQDKELTTEQWIEVFRQARAMGSVQLGFSGGEPLTRKDLPELIRAARDLGFYTNLITSGIGLTESKLDAFSEAGLDHIQISFQASDEVLNAALAGNKKAFQQKLAMAKAVKARDYPMVLNFVLHRHNIDQLDKIIELCIELEADDVELATCQFYGWAFLNREGLLPTREQIARAEQVVADYRQKMAASGNLTNLLFVTPDYYEERPKGCMGGWGSIFLSVTPEGTALPCHSARQLPVAFPSVLEQSLESIWYDSFGFNRYRGYDWMPEPCRSCDEKEKDFGGCRCQAFMLTGSADNADPVCSKSPHHHKILEARREAACSDIKVSQLQFRNRTRSQLIYQTRDL</sequence>
<keyword id="KW-0004">4Fe-4S</keyword>
<keyword id="KW-0408">Iron</keyword>
<keyword id="KW-0411">Iron-sulfur</keyword>
<keyword id="KW-0479">Metal-binding</keyword>
<keyword id="KW-0560">Oxidoreductase</keyword>
<keyword id="KW-0884">PQQ biosynthesis</keyword>
<keyword id="KW-0949">S-adenosyl-L-methionine</keyword>
<accession>P27507</accession>
<name>PQQE_KLEPN</name>
<organism>
    <name type="scientific">Klebsiella pneumoniae</name>
    <dbReference type="NCBI Taxonomy" id="573"/>
    <lineage>
        <taxon>Bacteria</taxon>
        <taxon>Pseudomonadati</taxon>
        <taxon>Pseudomonadota</taxon>
        <taxon>Gammaproteobacteria</taxon>
        <taxon>Enterobacterales</taxon>
        <taxon>Enterobacteriaceae</taxon>
        <taxon>Klebsiella/Raoultella group</taxon>
        <taxon>Klebsiella</taxon>
        <taxon>Klebsiella pneumoniae complex</taxon>
    </lineage>
</organism>
<feature type="chain" id="PRO_0000219940" description="PqqA peptide cyclase">
    <location>
        <begin position="1"/>
        <end position="380"/>
    </location>
</feature>
<feature type="domain" description="Radical SAM core" evidence="2">
    <location>
        <begin position="8"/>
        <end position="223"/>
    </location>
</feature>
<feature type="binding site" evidence="1">
    <location>
        <position position="22"/>
    </location>
    <ligand>
        <name>[4Fe-4S] cluster</name>
        <dbReference type="ChEBI" id="CHEBI:49883"/>
        <note>4Fe-4S-S-AdoMet</note>
    </ligand>
</feature>
<feature type="binding site" evidence="1">
    <location>
        <position position="26"/>
    </location>
    <ligand>
        <name>[4Fe-4S] cluster</name>
        <dbReference type="ChEBI" id="CHEBI:49883"/>
        <note>4Fe-4S-S-AdoMet</note>
    </ligand>
</feature>
<feature type="binding site" evidence="1">
    <location>
        <position position="29"/>
    </location>
    <ligand>
        <name>[4Fe-4S] cluster</name>
        <dbReference type="ChEBI" id="CHEBI:49883"/>
        <note>4Fe-4S-S-AdoMet</note>
    </ligand>
</feature>